<comment type="similarity">
    <text evidence="1">Belongs to the bacterial ribosomal protein bL28 family.</text>
</comment>
<reference key="1">
    <citation type="journal article" date="2009" name="Appl. Environ. Microbiol.">
        <title>Three genomes from the phylum Acidobacteria provide insight into the lifestyles of these microorganisms in soils.</title>
        <authorList>
            <person name="Ward N.L."/>
            <person name="Challacombe J.F."/>
            <person name="Janssen P.H."/>
            <person name="Henrissat B."/>
            <person name="Coutinho P.M."/>
            <person name="Wu M."/>
            <person name="Xie G."/>
            <person name="Haft D.H."/>
            <person name="Sait M."/>
            <person name="Badger J."/>
            <person name="Barabote R.D."/>
            <person name="Bradley B."/>
            <person name="Brettin T.S."/>
            <person name="Brinkac L.M."/>
            <person name="Bruce D."/>
            <person name="Creasy T."/>
            <person name="Daugherty S.C."/>
            <person name="Davidsen T.M."/>
            <person name="DeBoy R.T."/>
            <person name="Detter J.C."/>
            <person name="Dodson R.J."/>
            <person name="Durkin A.S."/>
            <person name="Ganapathy A."/>
            <person name="Gwinn-Giglio M."/>
            <person name="Han C.S."/>
            <person name="Khouri H."/>
            <person name="Kiss H."/>
            <person name="Kothari S.P."/>
            <person name="Madupu R."/>
            <person name="Nelson K.E."/>
            <person name="Nelson W.C."/>
            <person name="Paulsen I."/>
            <person name="Penn K."/>
            <person name="Ren Q."/>
            <person name="Rosovitz M.J."/>
            <person name="Selengut J.D."/>
            <person name="Shrivastava S."/>
            <person name="Sullivan S.A."/>
            <person name="Tapia R."/>
            <person name="Thompson L.S."/>
            <person name="Watkins K.L."/>
            <person name="Yang Q."/>
            <person name="Yu C."/>
            <person name="Zafar N."/>
            <person name="Zhou L."/>
            <person name="Kuske C.R."/>
        </authorList>
    </citation>
    <scope>NUCLEOTIDE SEQUENCE [LARGE SCALE GENOMIC DNA]</scope>
    <source>
        <strain>Ellin6076</strain>
    </source>
</reference>
<organism>
    <name type="scientific">Solibacter usitatus (strain Ellin6076)</name>
    <dbReference type="NCBI Taxonomy" id="234267"/>
    <lineage>
        <taxon>Bacteria</taxon>
        <taxon>Pseudomonadati</taxon>
        <taxon>Acidobacteriota</taxon>
        <taxon>Terriglobia</taxon>
        <taxon>Bryobacterales</taxon>
        <taxon>Solibacteraceae</taxon>
        <taxon>Candidatus Solibacter</taxon>
    </lineage>
</organism>
<sequence length="63" mass="7036">MAQTCDLCGRGPAFGNRISHAHNVTKRRWNINLQSVRALVNGAGRRMRVCTSCIRNNKVQKVA</sequence>
<evidence type="ECO:0000255" key="1">
    <source>
        <dbReference type="HAMAP-Rule" id="MF_00373"/>
    </source>
</evidence>
<evidence type="ECO:0000305" key="2"/>
<protein>
    <recommendedName>
        <fullName evidence="1">Large ribosomal subunit protein bL28</fullName>
    </recommendedName>
    <alternativeName>
        <fullName evidence="2">50S ribosomal protein L28</fullName>
    </alternativeName>
</protein>
<accession>Q01S07</accession>
<keyword id="KW-0687">Ribonucleoprotein</keyword>
<keyword id="KW-0689">Ribosomal protein</keyword>
<dbReference type="EMBL" id="CP000473">
    <property type="protein sequence ID" value="ABJ87563.1"/>
    <property type="molecule type" value="Genomic_DNA"/>
</dbReference>
<dbReference type="SMR" id="Q01S07"/>
<dbReference type="STRING" id="234267.Acid_6641"/>
<dbReference type="KEGG" id="sus:Acid_6641"/>
<dbReference type="eggNOG" id="COG0227">
    <property type="taxonomic scope" value="Bacteria"/>
</dbReference>
<dbReference type="HOGENOM" id="CLU_064548_7_0_0"/>
<dbReference type="InParanoid" id="Q01S07"/>
<dbReference type="OrthoDB" id="9805609at2"/>
<dbReference type="GO" id="GO:1990904">
    <property type="term" value="C:ribonucleoprotein complex"/>
    <property type="evidence" value="ECO:0007669"/>
    <property type="project" value="UniProtKB-KW"/>
</dbReference>
<dbReference type="GO" id="GO:0005840">
    <property type="term" value="C:ribosome"/>
    <property type="evidence" value="ECO:0007669"/>
    <property type="project" value="UniProtKB-KW"/>
</dbReference>
<dbReference type="GO" id="GO:0003735">
    <property type="term" value="F:structural constituent of ribosome"/>
    <property type="evidence" value="ECO:0007669"/>
    <property type="project" value="InterPro"/>
</dbReference>
<dbReference type="GO" id="GO:0006412">
    <property type="term" value="P:translation"/>
    <property type="evidence" value="ECO:0007669"/>
    <property type="project" value="UniProtKB-UniRule"/>
</dbReference>
<dbReference type="Gene3D" id="2.30.170.40">
    <property type="entry name" value="Ribosomal protein L28/L24"/>
    <property type="match status" value="1"/>
</dbReference>
<dbReference type="HAMAP" id="MF_00373">
    <property type="entry name" value="Ribosomal_bL28"/>
    <property type="match status" value="1"/>
</dbReference>
<dbReference type="InterPro" id="IPR050096">
    <property type="entry name" value="Bacterial_rp_bL28"/>
</dbReference>
<dbReference type="InterPro" id="IPR026569">
    <property type="entry name" value="Ribosomal_bL28"/>
</dbReference>
<dbReference type="InterPro" id="IPR034704">
    <property type="entry name" value="Ribosomal_bL28/bL31-like_sf"/>
</dbReference>
<dbReference type="InterPro" id="IPR001383">
    <property type="entry name" value="Ribosomal_bL28_bact-type"/>
</dbReference>
<dbReference type="InterPro" id="IPR037147">
    <property type="entry name" value="Ribosomal_bL28_sf"/>
</dbReference>
<dbReference type="NCBIfam" id="TIGR00009">
    <property type="entry name" value="L28"/>
    <property type="match status" value="1"/>
</dbReference>
<dbReference type="PANTHER" id="PTHR39080">
    <property type="entry name" value="50S RIBOSOMAL PROTEIN L28"/>
    <property type="match status" value="1"/>
</dbReference>
<dbReference type="PANTHER" id="PTHR39080:SF1">
    <property type="entry name" value="LARGE RIBOSOMAL SUBUNIT PROTEIN BL28A"/>
    <property type="match status" value="1"/>
</dbReference>
<dbReference type="Pfam" id="PF00830">
    <property type="entry name" value="Ribosomal_L28"/>
    <property type="match status" value="1"/>
</dbReference>
<dbReference type="SUPFAM" id="SSF143800">
    <property type="entry name" value="L28p-like"/>
    <property type="match status" value="1"/>
</dbReference>
<name>RL28_SOLUE</name>
<proteinExistence type="inferred from homology"/>
<gene>
    <name evidence="1" type="primary">rpmB</name>
    <name type="ordered locus">Acid_6641</name>
</gene>
<feature type="chain" id="PRO_1000007361" description="Large ribosomal subunit protein bL28">
    <location>
        <begin position="1"/>
        <end position="63"/>
    </location>
</feature>